<dbReference type="EC" id="6.1.1.3" evidence="1"/>
<dbReference type="EMBL" id="U11066">
    <property type="protein sequence ID" value="AAC43605.1"/>
    <property type="molecule type" value="Genomic_DNA"/>
</dbReference>
<dbReference type="EMBL" id="AE013218">
    <property type="protein sequence ID" value="AAM67686.1"/>
    <property type="molecule type" value="Genomic_DNA"/>
</dbReference>
<dbReference type="PIR" id="I40071">
    <property type="entry name" value="I40071"/>
</dbReference>
<dbReference type="RefSeq" id="WP_011053652.1">
    <property type="nucleotide sequence ID" value="NC_004061.1"/>
</dbReference>
<dbReference type="SMR" id="P46244"/>
<dbReference type="STRING" id="198804.BUsg_117"/>
<dbReference type="GeneID" id="93003587"/>
<dbReference type="KEGG" id="bas:BUsg_117"/>
<dbReference type="eggNOG" id="COG0441">
    <property type="taxonomic scope" value="Bacteria"/>
</dbReference>
<dbReference type="HOGENOM" id="CLU_008554_0_1_6"/>
<dbReference type="Proteomes" id="UP000000416">
    <property type="component" value="Chromosome"/>
</dbReference>
<dbReference type="GO" id="GO:0005829">
    <property type="term" value="C:cytosol"/>
    <property type="evidence" value="ECO:0007669"/>
    <property type="project" value="TreeGrafter"/>
</dbReference>
<dbReference type="GO" id="GO:0005524">
    <property type="term" value="F:ATP binding"/>
    <property type="evidence" value="ECO:0007669"/>
    <property type="project" value="UniProtKB-UniRule"/>
</dbReference>
<dbReference type="GO" id="GO:0046872">
    <property type="term" value="F:metal ion binding"/>
    <property type="evidence" value="ECO:0007669"/>
    <property type="project" value="UniProtKB-KW"/>
</dbReference>
<dbReference type="GO" id="GO:0004829">
    <property type="term" value="F:threonine-tRNA ligase activity"/>
    <property type="evidence" value="ECO:0007669"/>
    <property type="project" value="UniProtKB-UniRule"/>
</dbReference>
<dbReference type="GO" id="GO:0000049">
    <property type="term" value="F:tRNA binding"/>
    <property type="evidence" value="ECO:0007669"/>
    <property type="project" value="UniProtKB-KW"/>
</dbReference>
<dbReference type="GO" id="GO:0006435">
    <property type="term" value="P:threonyl-tRNA aminoacylation"/>
    <property type="evidence" value="ECO:0007669"/>
    <property type="project" value="UniProtKB-UniRule"/>
</dbReference>
<dbReference type="CDD" id="cd00860">
    <property type="entry name" value="ThrRS_anticodon"/>
    <property type="match status" value="1"/>
</dbReference>
<dbReference type="CDD" id="cd00771">
    <property type="entry name" value="ThrRS_core"/>
    <property type="match status" value="1"/>
</dbReference>
<dbReference type="FunFam" id="3.30.930.10:FF:000002">
    <property type="entry name" value="Threonine--tRNA ligase"/>
    <property type="match status" value="1"/>
</dbReference>
<dbReference type="FunFam" id="3.40.50.800:FF:000001">
    <property type="entry name" value="Threonine--tRNA ligase"/>
    <property type="match status" value="1"/>
</dbReference>
<dbReference type="Gene3D" id="3.10.20.30">
    <property type="match status" value="1"/>
</dbReference>
<dbReference type="Gene3D" id="3.30.54.20">
    <property type="match status" value="1"/>
</dbReference>
<dbReference type="Gene3D" id="3.40.50.800">
    <property type="entry name" value="Anticodon-binding domain"/>
    <property type="match status" value="1"/>
</dbReference>
<dbReference type="Gene3D" id="3.30.930.10">
    <property type="entry name" value="Bira Bifunctional Protein, Domain 2"/>
    <property type="match status" value="1"/>
</dbReference>
<dbReference type="Gene3D" id="3.30.980.10">
    <property type="entry name" value="Threonyl-trna Synthetase, Chain A, domain 2"/>
    <property type="match status" value="1"/>
</dbReference>
<dbReference type="HAMAP" id="MF_00184">
    <property type="entry name" value="Thr_tRNA_synth"/>
    <property type="match status" value="1"/>
</dbReference>
<dbReference type="InterPro" id="IPR002314">
    <property type="entry name" value="aa-tRNA-synt_IIb"/>
</dbReference>
<dbReference type="InterPro" id="IPR006195">
    <property type="entry name" value="aa-tRNA-synth_II"/>
</dbReference>
<dbReference type="InterPro" id="IPR045864">
    <property type="entry name" value="aa-tRNA-synth_II/BPL/LPL"/>
</dbReference>
<dbReference type="InterPro" id="IPR004154">
    <property type="entry name" value="Anticodon-bd"/>
</dbReference>
<dbReference type="InterPro" id="IPR036621">
    <property type="entry name" value="Anticodon-bd_dom_sf"/>
</dbReference>
<dbReference type="InterPro" id="IPR012675">
    <property type="entry name" value="Beta-grasp_dom_sf"/>
</dbReference>
<dbReference type="InterPro" id="IPR004095">
    <property type="entry name" value="TGS"/>
</dbReference>
<dbReference type="InterPro" id="IPR002320">
    <property type="entry name" value="Thr-tRNA-ligase_IIa"/>
</dbReference>
<dbReference type="InterPro" id="IPR018163">
    <property type="entry name" value="Thr/Ala-tRNA-synth_IIc_edit"/>
</dbReference>
<dbReference type="InterPro" id="IPR047246">
    <property type="entry name" value="ThrRS_anticodon"/>
</dbReference>
<dbReference type="InterPro" id="IPR033728">
    <property type="entry name" value="ThrRS_core"/>
</dbReference>
<dbReference type="InterPro" id="IPR012947">
    <property type="entry name" value="tRNA_SAD"/>
</dbReference>
<dbReference type="NCBIfam" id="TIGR00418">
    <property type="entry name" value="thrS"/>
    <property type="match status" value="1"/>
</dbReference>
<dbReference type="PANTHER" id="PTHR11451:SF44">
    <property type="entry name" value="THREONINE--TRNA LIGASE, CHLOROPLASTIC_MITOCHONDRIAL 2"/>
    <property type="match status" value="1"/>
</dbReference>
<dbReference type="PANTHER" id="PTHR11451">
    <property type="entry name" value="THREONINE-TRNA LIGASE"/>
    <property type="match status" value="1"/>
</dbReference>
<dbReference type="Pfam" id="PF03129">
    <property type="entry name" value="HGTP_anticodon"/>
    <property type="match status" value="1"/>
</dbReference>
<dbReference type="Pfam" id="PF00587">
    <property type="entry name" value="tRNA-synt_2b"/>
    <property type="match status" value="1"/>
</dbReference>
<dbReference type="Pfam" id="PF07973">
    <property type="entry name" value="tRNA_SAD"/>
    <property type="match status" value="1"/>
</dbReference>
<dbReference type="PRINTS" id="PR01047">
    <property type="entry name" value="TRNASYNTHTHR"/>
</dbReference>
<dbReference type="SMART" id="SM00863">
    <property type="entry name" value="tRNA_SAD"/>
    <property type="match status" value="1"/>
</dbReference>
<dbReference type="SUPFAM" id="SSF52954">
    <property type="entry name" value="Class II aaRS ABD-related"/>
    <property type="match status" value="1"/>
</dbReference>
<dbReference type="SUPFAM" id="SSF55681">
    <property type="entry name" value="Class II aaRS and biotin synthetases"/>
    <property type="match status" value="1"/>
</dbReference>
<dbReference type="SUPFAM" id="SSF55186">
    <property type="entry name" value="ThrRS/AlaRS common domain"/>
    <property type="match status" value="1"/>
</dbReference>
<dbReference type="PROSITE" id="PS50862">
    <property type="entry name" value="AA_TRNA_LIGASE_II"/>
    <property type="match status" value="1"/>
</dbReference>
<dbReference type="PROSITE" id="PS51880">
    <property type="entry name" value="TGS"/>
    <property type="match status" value="1"/>
</dbReference>
<reference key="1">
    <citation type="journal article" date="1995" name="Curr. Microbiol.">
        <title>Aromatic amino acid biosynthesis in Buchnera aphidicola (endosymbiont of aphids): cloning and sequencing of a DNA fragment containing aroH-thrS-infC-rpmI-rplT.</title>
        <authorList>
            <person name="Kolibachuk D."/>
            <person name="Rouhbakhsh D."/>
            <person name="Baumann P."/>
        </authorList>
    </citation>
    <scope>NUCLEOTIDE SEQUENCE [GENOMIC DNA]</scope>
</reference>
<reference key="2">
    <citation type="journal article" date="2002" name="Science">
        <title>50 million years of genomic stasis in endosymbiotic bacteria.</title>
        <authorList>
            <person name="Tamas I."/>
            <person name="Klasson L."/>
            <person name="Canbaeck B."/>
            <person name="Naeslund A.K."/>
            <person name="Eriksson A.-S."/>
            <person name="Wernegreen J.J."/>
            <person name="Sandstroem J.P."/>
            <person name="Moran N.A."/>
            <person name="Andersson S.G.E."/>
        </authorList>
    </citation>
    <scope>NUCLEOTIDE SEQUENCE [LARGE SCALE GENOMIC DNA]</scope>
    <source>
        <strain>Sg</strain>
    </source>
</reference>
<accession>P46244</accession>
<keyword id="KW-0030">Aminoacyl-tRNA synthetase</keyword>
<keyword id="KW-0067">ATP-binding</keyword>
<keyword id="KW-0963">Cytoplasm</keyword>
<keyword id="KW-0436">Ligase</keyword>
<keyword id="KW-0479">Metal-binding</keyword>
<keyword id="KW-0547">Nucleotide-binding</keyword>
<keyword id="KW-0648">Protein biosynthesis</keyword>
<keyword id="KW-0694">RNA-binding</keyword>
<keyword id="KW-0820">tRNA-binding</keyword>
<keyword id="KW-0862">Zinc</keyword>
<comment type="function">
    <text evidence="1">Catalyzes the attachment of threonine to tRNA(Thr) in a two-step reaction: L-threonine is first activated by ATP to form Thr-AMP and then transferred to the acceptor end of tRNA(Thr). Also edits incorrectly charged L-seryl-tRNA(Thr).</text>
</comment>
<comment type="catalytic activity">
    <reaction evidence="1">
        <text>tRNA(Thr) + L-threonine + ATP = L-threonyl-tRNA(Thr) + AMP + diphosphate + H(+)</text>
        <dbReference type="Rhea" id="RHEA:24624"/>
        <dbReference type="Rhea" id="RHEA-COMP:9670"/>
        <dbReference type="Rhea" id="RHEA-COMP:9704"/>
        <dbReference type="ChEBI" id="CHEBI:15378"/>
        <dbReference type="ChEBI" id="CHEBI:30616"/>
        <dbReference type="ChEBI" id="CHEBI:33019"/>
        <dbReference type="ChEBI" id="CHEBI:57926"/>
        <dbReference type="ChEBI" id="CHEBI:78442"/>
        <dbReference type="ChEBI" id="CHEBI:78534"/>
        <dbReference type="ChEBI" id="CHEBI:456215"/>
        <dbReference type="EC" id="6.1.1.3"/>
    </reaction>
</comment>
<comment type="cofactor">
    <cofactor evidence="1">
        <name>Zn(2+)</name>
        <dbReference type="ChEBI" id="CHEBI:29105"/>
    </cofactor>
    <text evidence="1">Binds 1 zinc ion per subunit.</text>
</comment>
<comment type="subunit">
    <text evidence="1">Homodimer.</text>
</comment>
<comment type="subcellular location">
    <subcellularLocation>
        <location evidence="1">Cytoplasm</location>
    </subcellularLocation>
</comment>
<comment type="similarity">
    <text evidence="1">Belongs to the class-II aminoacyl-tRNA synthetase family.</text>
</comment>
<proteinExistence type="inferred from homology"/>
<name>SYT_BUCAP</name>
<sequence>MPVIRFCDGSQQVYKHSVSLREIIENKKPNIIRSLIAISVNNSFSNFNTLITEDSSISFISKKDCEALNIIRYSCIQLLNYAAKKTWPSCKIGESEITKSGFYCDIDFENSITEEDFFILENNMKTLIKREYFISHQNISFDHAYEMFKKKSEIYKIHLIKKYINKKNKISLYYHENYFDIDMGMQVFNIKFCKYFKLQKIGGIYWKGDHKNKMLQRIYGTAWSTKKELDKHLSYINELKKRDHRKIGKLLNLYHMQKESPGMIFWHNNGWIIFNELEIFVREKLKEYKYKEVKTPLLIDKSIWQKSGHWDNYQDAIFTTSSENREYCIKPMNCPGHVQIFNCGLKSYRDLPIRMAEFGSCHRNESSGSLHGLMRIRNFTQDDAHIFCTQEQLRYEINNCIKMIYDLYSTFNFKKILVKFSTRPKKRIGDESVWDQAEKDLSDVLIENNLKFEHQEGEGAFYGPKIEFVLQDSLDRNWQCGTIQLDFYLPIRLRSFYIDEHNHQKIPIIIHRAILGSIERFIGILIEEFSGKLPTWLSPIQVVILSITDSHINYVKKIVQHFSDINIRVESDLRNEKIGFKIREHTLRQIPYILICGEKEIKSKKISVRTRNGYNLGIIDIDCFIKKLQKEIFTRSFYQMEE</sequence>
<protein>
    <recommendedName>
        <fullName evidence="1">Threonine--tRNA ligase</fullName>
        <ecNumber evidence="1">6.1.1.3</ecNumber>
    </recommendedName>
    <alternativeName>
        <fullName evidence="1">Threonyl-tRNA synthetase</fullName>
        <shortName evidence="1">ThrRS</shortName>
    </alternativeName>
</protein>
<gene>
    <name evidence="1" type="primary">thrS</name>
    <name type="ordered locus">BUsg_117</name>
</gene>
<organism>
    <name type="scientific">Buchnera aphidicola subsp. Schizaphis graminum (strain Sg)</name>
    <dbReference type="NCBI Taxonomy" id="198804"/>
    <lineage>
        <taxon>Bacteria</taxon>
        <taxon>Pseudomonadati</taxon>
        <taxon>Pseudomonadota</taxon>
        <taxon>Gammaproteobacteria</taxon>
        <taxon>Enterobacterales</taxon>
        <taxon>Erwiniaceae</taxon>
        <taxon>Buchnera</taxon>
    </lineage>
</organism>
<evidence type="ECO:0000255" key="1">
    <source>
        <dbReference type="HAMAP-Rule" id="MF_00184"/>
    </source>
</evidence>
<evidence type="ECO:0000255" key="2">
    <source>
        <dbReference type="PROSITE-ProRule" id="PRU01228"/>
    </source>
</evidence>
<evidence type="ECO:0000305" key="3"/>
<feature type="chain" id="PRO_0000100951" description="Threonine--tRNA ligase">
    <location>
        <begin position="1"/>
        <end position="642"/>
    </location>
</feature>
<feature type="domain" description="TGS" evidence="2">
    <location>
        <begin position="1"/>
        <end position="61"/>
    </location>
</feature>
<feature type="region of interest" description="Catalytic" evidence="1">
    <location>
        <begin position="243"/>
        <end position="534"/>
    </location>
</feature>
<feature type="binding site" evidence="1">
    <location>
        <position position="334"/>
    </location>
    <ligand>
        <name>Zn(2+)</name>
        <dbReference type="ChEBI" id="CHEBI:29105"/>
    </ligand>
</feature>
<feature type="binding site" evidence="1">
    <location>
        <position position="385"/>
    </location>
    <ligand>
        <name>Zn(2+)</name>
        <dbReference type="ChEBI" id="CHEBI:29105"/>
    </ligand>
</feature>
<feature type="binding site" evidence="1">
    <location>
        <position position="511"/>
    </location>
    <ligand>
        <name>Zn(2+)</name>
        <dbReference type="ChEBI" id="CHEBI:29105"/>
    </ligand>
</feature>
<feature type="sequence conflict" description="In Ref. 1; AAC43605." evidence="3" ref="1">
    <original>SLRE</original>
    <variation>LIER</variation>
    <location>
        <begin position="19"/>
        <end position="22"/>
    </location>
</feature>
<feature type="sequence conflict" description="In Ref. 1; AAC43605." evidence="3" ref="1">
    <original>N</original>
    <variation>I</variation>
    <location>
        <position position="26"/>
    </location>
</feature>
<feature type="sequence conflict" description="In Ref. 1; AAC43605." evidence="3" ref="1">
    <original>T</original>
    <variation>S</variation>
    <location>
        <position position="49"/>
    </location>
</feature>
<feature type="sequence conflict" description="In Ref. 1; AAC43605." evidence="3" ref="1">
    <original>T</original>
    <variation>R</variation>
    <location>
        <position position="86"/>
    </location>
</feature>
<feature type="sequence conflict" description="In Ref. 1; AAC43605." evidence="3" ref="1">
    <original>C</original>
    <variation>S</variation>
    <location>
        <position position="90"/>
    </location>
</feature>
<feature type="sequence conflict" description="In Ref. 1; AAC43605." evidence="3" ref="1">
    <original>SGFYCDIDFENSITEED</original>
    <variation>VVFIVILILKIVLQKKI</variation>
    <location>
        <begin position="100"/>
        <end position="116"/>
    </location>
</feature>
<feature type="sequence conflict" description="In Ref. 1; AAC43605." evidence="3" ref="1">
    <original>K</original>
    <variation>R</variation>
    <location>
        <position position="191"/>
    </location>
</feature>
<feature type="sequence conflict" description="In Ref. 1; AAC43605." evidence="3" ref="1">
    <original>KLQ</original>
    <variation>NY</variation>
    <location>
        <begin position="197"/>
        <end position="199"/>
    </location>
</feature>
<feature type="sequence conflict" description="In Ref. 1; AAC43605." evidence="3" ref="1">
    <original>EYK</original>
    <variation>GIIN</variation>
    <location>
        <begin position="287"/>
        <end position="289"/>
    </location>
</feature>
<feature type="sequence conflict" description="In Ref. 1; AAC43605." evidence="3" ref="1">
    <original>D</original>
    <variation>H</variation>
    <location>
        <position position="300"/>
    </location>
</feature>
<feature type="sequence conflict" description="In Ref. 1; AAC43605." evidence="3" ref="1">
    <original>A</original>
    <variation>R</variation>
    <location>
        <position position="316"/>
    </location>
</feature>
<feature type="sequence conflict" description="In Ref. 1; AAC43605." evidence="3" ref="1">
    <original>SGKL</original>
    <variation>QEI</variation>
    <location>
        <begin position="530"/>
        <end position="533"/>
    </location>
</feature>
<feature type="sequence conflict" description="In Ref. 1; AAC43605." evidence="3" ref="1">
    <original>EHTLRQIPYILICGEKEIKS</original>
    <variation>ATYIASNSIYINLWRKEKLNL</variation>
    <location>
        <begin position="584"/>
        <end position="603"/>
    </location>
</feature>